<name>HEM1_FUSNN</name>
<protein>
    <recommendedName>
        <fullName evidence="1">Glutamyl-tRNA reductase</fullName>
        <shortName evidence="1">GluTR</shortName>
        <ecNumber evidence="1">1.2.1.70</ecNumber>
    </recommendedName>
</protein>
<evidence type="ECO:0000255" key="1">
    <source>
        <dbReference type="HAMAP-Rule" id="MF_00087"/>
    </source>
</evidence>
<evidence type="ECO:0000305" key="2"/>
<comment type="function">
    <text evidence="1">Catalyzes the NADPH-dependent reduction of glutamyl-tRNA(Glu) to glutamate 1-semialdehyde (GSA).</text>
</comment>
<comment type="catalytic activity">
    <reaction evidence="1">
        <text>(S)-4-amino-5-oxopentanoate + tRNA(Glu) + NADP(+) = L-glutamyl-tRNA(Glu) + NADPH + H(+)</text>
        <dbReference type="Rhea" id="RHEA:12344"/>
        <dbReference type="Rhea" id="RHEA-COMP:9663"/>
        <dbReference type="Rhea" id="RHEA-COMP:9680"/>
        <dbReference type="ChEBI" id="CHEBI:15378"/>
        <dbReference type="ChEBI" id="CHEBI:57501"/>
        <dbReference type="ChEBI" id="CHEBI:57783"/>
        <dbReference type="ChEBI" id="CHEBI:58349"/>
        <dbReference type="ChEBI" id="CHEBI:78442"/>
        <dbReference type="ChEBI" id="CHEBI:78520"/>
        <dbReference type="EC" id="1.2.1.70"/>
    </reaction>
</comment>
<comment type="pathway">
    <text evidence="1">Porphyrin-containing compound metabolism; protoporphyrin-IX biosynthesis; 5-aminolevulinate from L-glutamyl-tRNA(Glu): step 1/2.</text>
</comment>
<comment type="subunit">
    <text evidence="1">Homodimer.</text>
</comment>
<comment type="domain">
    <text evidence="1">Possesses an unusual extended V-shaped dimeric structure with each monomer consisting of three distinct domains arranged along a curved 'spinal' alpha-helix. The N-terminal catalytic domain specifically recognizes the glutamate moiety of the substrate. The second domain is the NADPH-binding domain, and the third C-terminal domain is responsible for dimerization.</text>
</comment>
<comment type="miscellaneous">
    <text evidence="1">During catalysis, the active site Cys acts as a nucleophile attacking the alpha-carbonyl group of tRNA-bound glutamate with the formation of a thioester intermediate between enzyme and glutamate, and the concomitant release of tRNA(Glu). The thioester intermediate is finally reduced by direct hydride transfer from NADPH, to form the product GSA.</text>
</comment>
<comment type="similarity">
    <text evidence="1">Belongs to the glutamyl-tRNA reductase family.</text>
</comment>
<comment type="caution">
    <text evidence="2">Lacks the conserved histidine residue in position 89 which is potentially part of the active site; it is replaced by a tyrosine residue.</text>
</comment>
<gene>
    <name evidence="1" type="primary">hemA</name>
    <name type="ordered locus">FN0646</name>
</gene>
<feature type="chain" id="PRO_0000114027" description="Glutamyl-tRNA reductase">
    <location>
        <begin position="1"/>
        <end position="329"/>
    </location>
</feature>
<feature type="active site" description="Nucleophile" evidence="1">
    <location>
        <position position="52"/>
    </location>
</feature>
<feature type="binding site" evidence="1">
    <location>
        <begin position="51"/>
        <end position="54"/>
    </location>
    <ligand>
        <name>substrate</name>
    </ligand>
</feature>
<feature type="binding site" evidence="1">
    <location>
        <position position="99"/>
    </location>
    <ligand>
        <name>substrate</name>
    </ligand>
</feature>
<feature type="binding site" evidence="1">
    <location>
        <begin position="104"/>
        <end position="106"/>
    </location>
    <ligand>
        <name>substrate</name>
    </ligand>
</feature>
<feature type="binding site" evidence="1">
    <location>
        <position position="110"/>
    </location>
    <ligand>
        <name>substrate</name>
    </ligand>
</feature>
<feature type="binding site" evidence="1">
    <location>
        <begin position="179"/>
        <end position="184"/>
    </location>
    <ligand>
        <name>NADP(+)</name>
        <dbReference type="ChEBI" id="CHEBI:58349"/>
    </ligand>
</feature>
<keyword id="KW-0521">NADP</keyword>
<keyword id="KW-0560">Oxidoreductase</keyword>
<keyword id="KW-0627">Porphyrin biosynthesis</keyword>
<keyword id="KW-1185">Reference proteome</keyword>
<proteinExistence type="inferred from homology"/>
<organism>
    <name type="scientific">Fusobacterium nucleatum subsp. nucleatum (strain ATCC 25586 / DSM 15643 / BCRC 10681 / CIP 101130 / JCM 8532 / KCTC 2640 / LMG 13131 / VPI 4355)</name>
    <dbReference type="NCBI Taxonomy" id="190304"/>
    <lineage>
        <taxon>Bacteria</taxon>
        <taxon>Fusobacteriati</taxon>
        <taxon>Fusobacteriota</taxon>
        <taxon>Fusobacteriia</taxon>
        <taxon>Fusobacteriales</taxon>
        <taxon>Fusobacteriaceae</taxon>
        <taxon>Fusobacterium</taxon>
    </lineage>
</organism>
<reference key="1">
    <citation type="journal article" date="2002" name="J. Bacteriol.">
        <title>Genome sequence and analysis of the oral bacterium Fusobacterium nucleatum strain ATCC 25586.</title>
        <authorList>
            <person name="Kapatral V."/>
            <person name="Anderson I."/>
            <person name="Ivanova N."/>
            <person name="Reznik G."/>
            <person name="Los T."/>
            <person name="Lykidis A."/>
            <person name="Bhattacharyya A."/>
            <person name="Bartman A."/>
            <person name="Gardner W."/>
            <person name="Grechkin G."/>
            <person name="Zhu L."/>
            <person name="Vasieva O."/>
            <person name="Chu L."/>
            <person name="Kogan Y."/>
            <person name="Chaga O."/>
            <person name="Goltsman E."/>
            <person name="Bernal A."/>
            <person name="Larsen N."/>
            <person name="D'Souza M."/>
            <person name="Walunas T."/>
            <person name="Pusch G."/>
            <person name="Haselkorn R."/>
            <person name="Fonstein M."/>
            <person name="Kyrpides N.C."/>
            <person name="Overbeek R."/>
        </authorList>
    </citation>
    <scope>NUCLEOTIDE SEQUENCE [LARGE SCALE GENOMIC DNA]</scope>
    <source>
        <strain>ATCC 25586 / DSM 15643 / BCRC 10681 / CIP 101130 / JCM 8532 / KCTC 2640 / LMG 13131 / VPI 4355</strain>
    </source>
</reference>
<dbReference type="EC" id="1.2.1.70" evidence="1"/>
<dbReference type="EMBL" id="AE009951">
    <property type="protein sequence ID" value="AAL94842.1"/>
    <property type="molecule type" value="Genomic_DNA"/>
</dbReference>
<dbReference type="RefSeq" id="NP_603543.1">
    <property type="nucleotide sequence ID" value="NC_003454.1"/>
</dbReference>
<dbReference type="RefSeq" id="WP_011016556.1">
    <property type="nucleotide sequence ID" value="NZ_CP028101.1"/>
</dbReference>
<dbReference type="SMR" id="Q8R687"/>
<dbReference type="FunCoup" id="Q8R687">
    <property type="interactions" value="272"/>
</dbReference>
<dbReference type="STRING" id="190304.FN0646"/>
<dbReference type="PaxDb" id="190304-FN0646"/>
<dbReference type="EnsemblBacteria" id="AAL94842">
    <property type="protein sequence ID" value="AAL94842"/>
    <property type="gene ID" value="FN0646"/>
</dbReference>
<dbReference type="GeneID" id="79783643"/>
<dbReference type="KEGG" id="fnu:FN0646"/>
<dbReference type="PATRIC" id="fig|190304.8.peg.1210"/>
<dbReference type="eggNOG" id="COG0373">
    <property type="taxonomic scope" value="Bacteria"/>
</dbReference>
<dbReference type="HOGENOM" id="CLU_035113_1_2_0"/>
<dbReference type="InParanoid" id="Q8R687"/>
<dbReference type="BioCyc" id="FNUC190304:G1FZS-1232-MONOMER"/>
<dbReference type="UniPathway" id="UPA00251">
    <property type="reaction ID" value="UER00316"/>
</dbReference>
<dbReference type="Proteomes" id="UP000002521">
    <property type="component" value="Chromosome"/>
</dbReference>
<dbReference type="GO" id="GO:0008883">
    <property type="term" value="F:glutamyl-tRNA reductase activity"/>
    <property type="evidence" value="ECO:0007669"/>
    <property type="project" value="UniProtKB-UniRule"/>
</dbReference>
<dbReference type="GO" id="GO:0050661">
    <property type="term" value="F:NADP binding"/>
    <property type="evidence" value="ECO:0007669"/>
    <property type="project" value="InterPro"/>
</dbReference>
<dbReference type="GO" id="GO:0006782">
    <property type="term" value="P:protoporphyrinogen IX biosynthetic process"/>
    <property type="evidence" value="ECO:0007669"/>
    <property type="project" value="UniProtKB-UniRule"/>
</dbReference>
<dbReference type="CDD" id="cd05213">
    <property type="entry name" value="NAD_bind_Glutamyl_tRNA_reduct"/>
    <property type="match status" value="1"/>
</dbReference>
<dbReference type="Gene3D" id="3.30.460.30">
    <property type="entry name" value="Glutamyl-tRNA reductase, N-terminal domain"/>
    <property type="match status" value="1"/>
</dbReference>
<dbReference type="Gene3D" id="3.40.50.720">
    <property type="entry name" value="NAD(P)-binding Rossmann-like Domain"/>
    <property type="match status" value="1"/>
</dbReference>
<dbReference type="HAMAP" id="MF_00087">
    <property type="entry name" value="Glu_tRNA_reductase"/>
    <property type="match status" value="1"/>
</dbReference>
<dbReference type="InterPro" id="IPR000343">
    <property type="entry name" value="4pyrrol_synth_GluRdtase"/>
</dbReference>
<dbReference type="InterPro" id="IPR015895">
    <property type="entry name" value="4pyrrol_synth_GluRdtase_N"/>
</dbReference>
<dbReference type="InterPro" id="IPR018214">
    <property type="entry name" value="GluRdtase_CS"/>
</dbReference>
<dbReference type="InterPro" id="IPR036343">
    <property type="entry name" value="GluRdtase_N_sf"/>
</dbReference>
<dbReference type="InterPro" id="IPR036291">
    <property type="entry name" value="NAD(P)-bd_dom_sf"/>
</dbReference>
<dbReference type="InterPro" id="IPR006151">
    <property type="entry name" value="Shikm_DH/Glu-tRNA_Rdtase"/>
</dbReference>
<dbReference type="NCBIfam" id="TIGR01035">
    <property type="entry name" value="hemA"/>
    <property type="match status" value="1"/>
</dbReference>
<dbReference type="PANTHER" id="PTHR43120">
    <property type="entry name" value="GLUTAMYL-TRNA REDUCTASE 1, CHLOROPLASTIC"/>
    <property type="match status" value="1"/>
</dbReference>
<dbReference type="PANTHER" id="PTHR43120:SF1">
    <property type="entry name" value="GLUTAMYL-TRNA REDUCTASE 1, CHLOROPLASTIC"/>
    <property type="match status" value="1"/>
</dbReference>
<dbReference type="Pfam" id="PF05201">
    <property type="entry name" value="GlutR_N"/>
    <property type="match status" value="1"/>
</dbReference>
<dbReference type="Pfam" id="PF01488">
    <property type="entry name" value="Shikimate_DH"/>
    <property type="match status" value="1"/>
</dbReference>
<dbReference type="SUPFAM" id="SSF69742">
    <property type="entry name" value="Glutamyl tRNA-reductase catalytic, N-terminal domain"/>
    <property type="match status" value="1"/>
</dbReference>
<dbReference type="SUPFAM" id="SSF51735">
    <property type="entry name" value="NAD(P)-binding Rossmann-fold domains"/>
    <property type="match status" value="1"/>
</dbReference>
<dbReference type="PROSITE" id="PS00747">
    <property type="entry name" value="GLUTR"/>
    <property type="match status" value="1"/>
</dbReference>
<sequence length="329" mass="38592">MLDLENIIVIGVSHENLSLLERENFMRTRPKYIIERLYTEKKINAYINLSTCLRTEFYIELNSNIKAKEIKNLFSVDMIVKSRVEAIEYLFKVGCGFYSVIKGEDQILAQVKGAYAEALENEHSSKFLNIIFNKSIELGKKFRTKSMIAHNALSLEAISLKFIKSKFPNIEDKNIFILGIGELAQDILTLLTKEQLKNIYIANRTYHKAEQIKKEFDIVNIVDYREKYPKMIEADVIISATSAPHIVVEYDKFVAQMKENKDYLFIDLAVPRDVDERLANFKNIEIYNLDDIWEVYHLNSMNRDKLLEDYSYLIDEQMEKLIKTLNYYK</sequence>
<accession>Q8R687</accession>